<evidence type="ECO:0000250" key="1"/>
<evidence type="ECO:0000255" key="2"/>
<evidence type="ECO:0000305" key="3"/>
<reference key="1">
    <citation type="journal article" date="1987" name="Mol. Gen. Genet.">
        <title>Structure and expression of the overlapping ND4L and ND5 genes of Neurospora crassa mitochondria.</title>
        <authorList>
            <person name="Nelson M.A."/>
            <person name="Macino G."/>
        </authorList>
    </citation>
    <scope>NUCLEOTIDE SEQUENCE [GENOMIC DNA]</scope>
    <source>
        <strain>ATCC 24698 / 74-OR23-1A / CBS 708.71 / DSM 1257 / FGSC 987</strain>
    </source>
</reference>
<reference key="2">
    <citation type="journal article" date="2003" name="Nature">
        <title>The genome sequence of the filamentous fungus Neurospora crassa.</title>
        <authorList>
            <person name="Galagan J.E."/>
            <person name="Calvo S.E."/>
            <person name="Borkovich K.A."/>
            <person name="Selker E.U."/>
            <person name="Read N.D."/>
            <person name="Jaffe D.B."/>
            <person name="FitzHugh W."/>
            <person name="Ma L.-J."/>
            <person name="Smirnov S."/>
            <person name="Purcell S."/>
            <person name="Rehman B."/>
            <person name="Elkins T."/>
            <person name="Engels R."/>
            <person name="Wang S."/>
            <person name="Nielsen C.B."/>
            <person name="Butler J."/>
            <person name="Endrizzi M."/>
            <person name="Qui D."/>
            <person name="Ianakiev P."/>
            <person name="Bell-Pedersen D."/>
            <person name="Nelson M.A."/>
            <person name="Werner-Washburne M."/>
            <person name="Selitrennikoff C.P."/>
            <person name="Kinsey J.A."/>
            <person name="Braun E.L."/>
            <person name="Zelter A."/>
            <person name="Schulte U."/>
            <person name="Kothe G.O."/>
            <person name="Jedd G."/>
            <person name="Mewes H.-W."/>
            <person name="Staben C."/>
            <person name="Marcotte E."/>
            <person name="Greenberg D."/>
            <person name="Roy A."/>
            <person name="Foley K."/>
            <person name="Naylor J."/>
            <person name="Stange-Thomann N."/>
            <person name="Barrett R."/>
            <person name="Gnerre S."/>
            <person name="Kamal M."/>
            <person name="Kamvysselis M."/>
            <person name="Mauceli E.W."/>
            <person name="Bielke C."/>
            <person name="Rudd S."/>
            <person name="Frishman D."/>
            <person name="Krystofova S."/>
            <person name="Rasmussen C."/>
            <person name="Metzenberg R.L."/>
            <person name="Perkins D.D."/>
            <person name="Kroken S."/>
            <person name="Cogoni C."/>
            <person name="Macino G."/>
            <person name="Catcheside D.E.A."/>
            <person name="Li W."/>
            <person name="Pratt R.J."/>
            <person name="Osmani S.A."/>
            <person name="DeSouza C.P.C."/>
            <person name="Glass N.L."/>
            <person name="Orbach M.J."/>
            <person name="Berglund J.A."/>
            <person name="Voelker R."/>
            <person name="Yarden O."/>
            <person name="Plamann M."/>
            <person name="Seiler S."/>
            <person name="Dunlap J.C."/>
            <person name="Radford A."/>
            <person name="Aramayo R."/>
            <person name="Natvig D.O."/>
            <person name="Alex L.A."/>
            <person name="Mannhaupt G."/>
            <person name="Ebbole D.J."/>
            <person name="Freitag M."/>
            <person name="Paulsen I."/>
            <person name="Sachs M.S."/>
            <person name="Lander E.S."/>
            <person name="Nusbaum C."/>
            <person name="Birren B.W."/>
        </authorList>
    </citation>
    <scope>NUCLEOTIDE SEQUENCE [LARGE SCALE GENOMIC DNA]</scope>
    <source>
        <strain>ATCC 24698 / 74-OR23-1A / CBS 708.71 / DSM 1257 / FGSC 987</strain>
    </source>
</reference>
<reference key="3">
    <citation type="book" date="2004" name="The Mycota II, Genetics and Biotechnology (2nd edition)">
        <title>Mitochondrial genetics of Neurospora.</title>
        <editorList>
            <person name="Kueck U."/>
        </editorList>
        <authorList>
            <person name="Kennell J.C."/>
            <person name="Collins R.A."/>
            <person name="Griffiths A.J.F."/>
            <person name="Nargang F.E."/>
        </authorList>
    </citation>
    <scope>GENOME REANNOTATION</scope>
    <source>
        <strain>ATCC 24698 / 74-OR23-1A / CBS 708.71 / DSM 1257 / FGSC 987</strain>
    </source>
</reference>
<feature type="chain" id="PRO_0000118118" description="NADH-ubiquinone oxidoreductase chain 5">
    <location>
        <begin position="1"/>
        <end position="715"/>
    </location>
</feature>
<feature type="transmembrane region" description="Helical" evidence="2">
    <location>
        <begin position="1"/>
        <end position="21"/>
    </location>
</feature>
<feature type="transmembrane region" description="Helical" evidence="2">
    <location>
        <begin position="30"/>
        <end position="50"/>
    </location>
</feature>
<feature type="transmembrane region" description="Helical" evidence="2">
    <location>
        <begin position="81"/>
        <end position="101"/>
    </location>
</feature>
<feature type="transmembrane region" description="Helical" evidence="2">
    <location>
        <begin position="119"/>
        <end position="139"/>
    </location>
</feature>
<feature type="transmembrane region" description="Helical" evidence="2">
    <location>
        <begin position="140"/>
        <end position="160"/>
    </location>
</feature>
<feature type="transmembrane region" description="Helical" evidence="2">
    <location>
        <begin position="177"/>
        <end position="197"/>
    </location>
</feature>
<feature type="transmembrane region" description="Helical" evidence="2">
    <location>
        <begin position="200"/>
        <end position="220"/>
    </location>
</feature>
<feature type="transmembrane region" description="Helical" evidence="2">
    <location>
        <begin position="241"/>
        <end position="261"/>
    </location>
</feature>
<feature type="transmembrane region" description="Helical" evidence="2">
    <location>
        <begin position="274"/>
        <end position="294"/>
    </location>
</feature>
<feature type="transmembrane region" description="Helical" evidence="2">
    <location>
        <begin position="310"/>
        <end position="330"/>
    </location>
</feature>
<feature type="transmembrane region" description="Helical" evidence="2">
    <location>
        <begin position="331"/>
        <end position="351"/>
    </location>
</feature>
<feature type="transmembrane region" description="Helical" evidence="2">
    <location>
        <begin position="366"/>
        <end position="386"/>
    </location>
</feature>
<feature type="transmembrane region" description="Helical" evidence="2">
    <location>
        <begin position="403"/>
        <end position="423"/>
    </location>
</feature>
<feature type="transmembrane region" description="Helical" evidence="2">
    <location>
        <begin position="487"/>
        <end position="507"/>
    </location>
</feature>
<feature type="transmembrane region" description="Helical" evidence="2">
    <location>
        <begin position="543"/>
        <end position="563"/>
    </location>
</feature>
<feature type="transmembrane region" description="Helical" evidence="2">
    <location>
        <begin position="647"/>
        <end position="667"/>
    </location>
</feature>
<feature type="transmembrane region" description="Helical" evidence="2">
    <location>
        <begin position="668"/>
        <end position="688"/>
    </location>
</feature>
<protein>
    <recommendedName>
        <fullName>NADH-ubiquinone oxidoreductase chain 5</fullName>
        <ecNumber>7.1.1.2</ecNumber>
    </recommendedName>
    <alternativeName>
        <fullName>NADH dehydrogenase subunit 5</fullName>
    </alternativeName>
</protein>
<comment type="function">
    <text>Core subunit of the mitochondrial membrane respiratory chain NADH dehydrogenase (Complex I) that is believed to belong to the minimal assembly required for catalysis. Complex I functions in the transfer of electrons from NADH to the respiratory chain. The immediate electron acceptor for the enzyme is believed to be ubiquinone.</text>
</comment>
<comment type="catalytic activity">
    <reaction>
        <text>a ubiquinone + NADH + 5 H(+)(in) = a ubiquinol + NAD(+) + 4 H(+)(out)</text>
        <dbReference type="Rhea" id="RHEA:29091"/>
        <dbReference type="Rhea" id="RHEA-COMP:9565"/>
        <dbReference type="Rhea" id="RHEA-COMP:9566"/>
        <dbReference type="ChEBI" id="CHEBI:15378"/>
        <dbReference type="ChEBI" id="CHEBI:16389"/>
        <dbReference type="ChEBI" id="CHEBI:17976"/>
        <dbReference type="ChEBI" id="CHEBI:57540"/>
        <dbReference type="ChEBI" id="CHEBI:57945"/>
        <dbReference type="EC" id="7.1.1.2"/>
    </reaction>
</comment>
<comment type="subcellular location">
    <subcellularLocation>
        <location evidence="1">Mitochondrion inner membrane</location>
        <topology evidence="1">Multi-pass membrane protein</topology>
    </subcellularLocation>
</comment>
<comment type="similarity">
    <text evidence="3">Belongs to the complex I subunit 5 family.</text>
</comment>
<name>NU5M_NEUCR</name>
<geneLocation type="mitochondrion"/>
<keyword id="KW-0249">Electron transport</keyword>
<keyword id="KW-0472">Membrane</keyword>
<keyword id="KW-0496">Mitochondrion</keyword>
<keyword id="KW-0999">Mitochondrion inner membrane</keyword>
<keyword id="KW-0520">NAD</keyword>
<keyword id="KW-1185">Reference proteome</keyword>
<keyword id="KW-0679">Respiratory chain</keyword>
<keyword id="KW-1278">Translocase</keyword>
<keyword id="KW-0812">Transmembrane</keyword>
<keyword id="KW-1133">Transmembrane helix</keyword>
<keyword id="KW-0813">Transport</keyword>
<keyword id="KW-0830">Ubiquinone</keyword>
<proteinExistence type="inferred from homology"/>
<organism>
    <name type="scientific">Neurospora crassa (strain ATCC 24698 / 74-OR23-1A / CBS 708.71 / DSM 1257 / FGSC 987)</name>
    <dbReference type="NCBI Taxonomy" id="367110"/>
    <lineage>
        <taxon>Eukaryota</taxon>
        <taxon>Fungi</taxon>
        <taxon>Dikarya</taxon>
        <taxon>Ascomycota</taxon>
        <taxon>Pezizomycotina</taxon>
        <taxon>Sordariomycetes</taxon>
        <taxon>Sordariomycetidae</taxon>
        <taxon>Sordariales</taxon>
        <taxon>Sordariaceae</taxon>
        <taxon>Neurospora</taxon>
    </lineage>
</organism>
<dbReference type="EC" id="7.1.1.2"/>
<dbReference type="EMBL" id="X05115">
    <property type="protein sequence ID" value="CAB37187.1"/>
    <property type="molecule type" value="Genomic_DNA"/>
</dbReference>
<dbReference type="EMBL" id="KC683708">
    <property type="protein sequence ID" value="AGG15999.1"/>
    <property type="molecule type" value="Genomic_DNA"/>
</dbReference>
<dbReference type="PIR" id="S10843">
    <property type="entry name" value="S10843"/>
</dbReference>
<dbReference type="RefSeq" id="YP_009126711.1">
    <property type="nucleotide sequence ID" value="NC_026614.1"/>
</dbReference>
<dbReference type="SMR" id="P05510"/>
<dbReference type="STRING" id="367110.P05510"/>
<dbReference type="TCDB" id="3.D.1.6.2">
    <property type="family name" value="the h+ or na+-translocating nadh dehydrogenase (ndh) family"/>
</dbReference>
<dbReference type="EnsemblFungi" id="AGG15999">
    <property type="protein sequence ID" value="AGG15999"/>
    <property type="gene ID" value="NCU16012"/>
</dbReference>
<dbReference type="GeneID" id="23681563"/>
<dbReference type="KEGG" id="ncr:NCU16012"/>
<dbReference type="VEuPathDB" id="FungiDB:NCU16012"/>
<dbReference type="InParanoid" id="P05510"/>
<dbReference type="OrthoDB" id="2686308at2759"/>
<dbReference type="Proteomes" id="UP000001805">
    <property type="component" value="Mitochondrion"/>
</dbReference>
<dbReference type="GO" id="GO:0005743">
    <property type="term" value="C:mitochondrial inner membrane"/>
    <property type="evidence" value="ECO:0007669"/>
    <property type="project" value="UniProtKB-SubCell"/>
</dbReference>
<dbReference type="GO" id="GO:0045271">
    <property type="term" value="C:respiratory chain complex I"/>
    <property type="evidence" value="ECO:0000318"/>
    <property type="project" value="GO_Central"/>
</dbReference>
<dbReference type="GO" id="GO:0008137">
    <property type="term" value="F:NADH dehydrogenase (ubiquinone) activity"/>
    <property type="evidence" value="ECO:0007669"/>
    <property type="project" value="UniProtKB-EC"/>
</dbReference>
<dbReference type="GO" id="GO:0042773">
    <property type="term" value="P:ATP synthesis coupled electron transport"/>
    <property type="evidence" value="ECO:0007669"/>
    <property type="project" value="InterPro"/>
</dbReference>
<dbReference type="GO" id="GO:0015990">
    <property type="term" value="P:electron transport coupled proton transport"/>
    <property type="evidence" value="ECO:0000318"/>
    <property type="project" value="GO_Central"/>
</dbReference>
<dbReference type="InterPro" id="IPR018393">
    <property type="entry name" value="NADHpl_OxRdtase_5_subgr"/>
</dbReference>
<dbReference type="InterPro" id="IPR001750">
    <property type="entry name" value="ND/Mrp_TM"/>
</dbReference>
<dbReference type="InterPro" id="IPR003945">
    <property type="entry name" value="NU5C-like"/>
</dbReference>
<dbReference type="InterPro" id="IPR001516">
    <property type="entry name" value="Proton_antipo_N"/>
</dbReference>
<dbReference type="NCBIfam" id="TIGR01974">
    <property type="entry name" value="NDH_I_L"/>
    <property type="match status" value="1"/>
</dbReference>
<dbReference type="NCBIfam" id="NF005141">
    <property type="entry name" value="PRK06590.1"/>
    <property type="match status" value="1"/>
</dbReference>
<dbReference type="PANTHER" id="PTHR42829">
    <property type="entry name" value="NADH-UBIQUINONE OXIDOREDUCTASE CHAIN 5"/>
    <property type="match status" value="1"/>
</dbReference>
<dbReference type="PANTHER" id="PTHR42829:SF2">
    <property type="entry name" value="NADH-UBIQUINONE OXIDOREDUCTASE CHAIN 5"/>
    <property type="match status" value="1"/>
</dbReference>
<dbReference type="Pfam" id="PF00361">
    <property type="entry name" value="Proton_antipo_M"/>
    <property type="match status" value="1"/>
</dbReference>
<dbReference type="Pfam" id="PF00662">
    <property type="entry name" value="Proton_antipo_N"/>
    <property type="match status" value="1"/>
</dbReference>
<dbReference type="PRINTS" id="PR01434">
    <property type="entry name" value="NADHDHGNASE5"/>
</dbReference>
<dbReference type="PRINTS" id="PR01435">
    <property type="entry name" value="NPOXDRDTASE5"/>
</dbReference>
<sequence>MYLSIIILPLLGSIVAGFFGRKVGVSGAQLITCLSVIITTGLAILAFFEVGFNNIPVTINLFRWIDSEWYNILWGFQFDSLTVAMLIPVLIISSLVHIYSISYMSHDPHNQRFFSYLSLFTFMMIILVTANNYLLMFVGWEGVGVCSYLLVSFWFTRIAANQSSMSAFLTNRVGDCFLTIGMFVVLWTLGNLDYATVFSLAPYINSDIATIIGICLLIGAMAKSSQVGLHVWLPMAMEGPTPVSALIHAATMVTAGVYLLMRSSPLIEYSSTVLLLCLWLGAITTVFSSLIGLFQQDIKKVIAYSTMSQLGMMVIAIGLSSYNVALFHLINHAFYKALLFLGAGSVIHAVADNQDFRKFGGLKNYLPLTYSVMLIASLSLVAFPYMTGFYSKDFILESAYGQFSFSGVAVYIIATIGAIFTTLYSVKVLYLTFLANPNGYIHFYRHFILYERLYVYVSYTGKEEFYLPKHMSKEINNLPRSVSGEGGFFLSLPLVILALFSIFFGFITKDIFIGLGSNFFIDNSLFIHPIHEIMIDTEFAVPTLFKLLPFIFTISFSLIALVLSEKYPNLVVHFKLSRLGYNLFGFFNQRFLVELFYNKYITNLVLDLGGQITKILDKGSIELLGPFGLEKVLIKWSKDIASLSTSIVTNYALFILVGFILYVFTFISLLEGGLDLNLSLFILLLSLTSSTSSSDSKEGKMIKKAVVSTKNKNIR</sequence>
<gene>
    <name type="primary">ndh-5</name>
    <name type="synonym">ND5</name>
    <name type="ORF">NCM001</name>
    <name type="ORF">NCU16012</name>
</gene>
<accession>P05510</accession>
<accession>M1RM71</accession>